<feature type="chain" id="PRO_0000341750" description="2-succinyl-5-enolpyruvyl-6-hydroxy-3-cyclohexene-1-carboxylate synthase">
    <location>
        <begin position="1"/>
        <end position="586"/>
    </location>
</feature>
<comment type="function">
    <text evidence="1">Catalyzes the thiamine diphosphate-dependent decarboxylation of 2-oxoglutarate and the subsequent addition of the resulting succinic semialdehyde-thiamine pyrophosphate anion to isochorismate to yield 2-succinyl-5-enolpyruvyl-6-hydroxy-3-cyclohexene-1-carboxylate (SEPHCHC).</text>
</comment>
<comment type="catalytic activity">
    <reaction evidence="1">
        <text>isochorismate + 2-oxoglutarate + H(+) = 5-enolpyruvoyl-6-hydroxy-2-succinyl-cyclohex-3-ene-1-carboxylate + CO2</text>
        <dbReference type="Rhea" id="RHEA:25593"/>
        <dbReference type="ChEBI" id="CHEBI:15378"/>
        <dbReference type="ChEBI" id="CHEBI:16526"/>
        <dbReference type="ChEBI" id="CHEBI:16810"/>
        <dbReference type="ChEBI" id="CHEBI:29780"/>
        <dbReference type="ChEBI" id="CHEBI:58818"/>
        <dbReference type="EC" id="2.2.1.9"/>
    </reaction>
</comment>
<comment type="cofactor">
    <cofactor evidence="1">
        <name>Mg(2+)</name>
        <dbReference type="ChEBI" id="CHEBI:18420"/>
    </cofactor>
    <cofactor evidence="1">
        <name>Mn(2+)</name>
        <dbReference type="ChEBI" id="CHEBI:29035"/>
    </cofactor>
</comment>
<comment type="cofactor">
    <cofactor evidence="1">
        <name>thiamine diphosphate</name>
        <dbReference type="ChEBI" id="CHEBI:58937"/>
    </cofactor>
    <text evidence="1">Binds 1 thiamine pyrophosphate per subunit.</text>
</comment>
<comment type="pathway">
    <text evidence="1">Quinol/quinone metabolism; 1,4-dihydroxy-2-naphthoate biosynthesis; 1,4-dihydroxy-2-naphthoate from chorismate: step 2/7.</text>
</comment>
<comment type="pathway">
    <text evidence="1">Quinol/quinone metabolism; menaquinone biosynthesis.</text>
</comment>
<comment type="subunit">
    <text evidence="1">Homodimer.</text>
</comment>
<comment type="similarity">
    <text evidence="1">Belongs to the TPP enzyme family. MenD subfamily.</text>
</comment>
<organism>
    <name type="scientific">Geobacillus thermodenitrificans (strain NG80-2)</name>
    <dbReference type="NCBI Taxonomy" id="420246"/>
    <lineage>
        <taxon>Bacteria</taxon>
        <taxon>Bacillati</taxon>
        <taxon>Bacillota</taxon>
        <taxon>Bacilli</taxon>
        <taxon>Bacillales</taxon>
        <taxon>Anoxybacillaceae</taxon>
        <taxon>Geobacillus</taxon>
    </lineage>
</organism>
<reference key="1">
    <citation type="journal article" date="2007" name="Proc. Natl. Acad. Sci. U.S.A.">
        <title>Genome and proteome of long-chain alkane degrading Geobacillus thermodenitrificans NG80-2 isolated from a deep-subsurface oil reservoir.</title>
        <authorList>
            <person name="Feng L."/>
            <person name="Wang W."/>
            <person name="Cheng J."/>
            <person name="Ren Y."/>
            <person name="Zhao G."/>
            <person name="Gao C."/>
            <person name="Tang Y."/>
            <person name="Liu X."/>
            <person name="Han W."/>
            <person name="Peng X."/>
            <person name="Liu R."/>
            <person name="Wang L."/>
        </authorList>
    </citation>
    <scope>NUCLEOTIDE SEQUENCE [LARGE SCALE GENOMIC DNA]</scope>
    <source>
        <strain>NG80-2</strain>
    </source>
</reference>
<gene>
    <name evidence="1" type="primary">menD</name>
    <name type="ordered locus">GTNG_2773</name>
</gene>
<dbReference type="EC" id="2.2.1.9" evidence="1"/>
<dbReference type="EMBL" id="CP000557">
    <property type="protein sequence ID" value="ABO68118.1"/>
    <property type="molecule type" value="Genomic_DNA"/>
</dbReference>
<dbReference type="RefSeq" id="WP_011888023.1">
    <property type="nucleotide sequence ID" value="NC_009328.1"/>
</dbReference>
<dbReference type="SMR" id="A4IS14"/>
<dbReference type="KEGG" id="gtn:GTNG_2773"/>
<dbReference type="eggNOG" id="COG1165">
    <property type="taxonomic scope" value="Bacteria"/>
</dbReference>
<dbReference type="HOGENOM" id="CLU_006051_3_0_9"/>
<dbReference type="UniPathway" id="UPA00079"/>
<dbReference type="UniPathway" id="UPA01057">
    <property type="reaction ID" value="UER00164"/>
</dbReference>
<dbReference type="Proteomes" id="UP000001578">
    <property type="component" value="Chromosome"/>
</dbReference>
<dbReference type="GO" id="GO:0070204">
    <property type="term" value="F:2-succinyl-5-enolpyruvyl-6-hydroxy-3-cyclohexene-1-carboxylic-acid synthase activity"/>
    <property type="evidence" value="ECO:0007669"/>
    <property type="project" value="UniProtKB-UniRule"/>
</dbReference>
<dbReference type="GO" id="GO:0000287">
    <property type="term" value="F:magnesium ion binding"/>
    <property type="evidence" value="ECO:0007669"/>
    <property type="project" value="UniProtKB-UniRule"/>
</dbReference>
<dbReference type="GO" id="GO:0030145">
    <property type="term" value="F:manganese ion binding"/>
    <property type="evidence" value="ECO:0007669"/>
    <property type="project" value="UniProtKB-UniRule"/>
</dbReference>
<dbReference type="GO" id="GO:0030976">
    <property type="term" value="F:thiamine pyrophosphate binding"/>
    <property type="evidence" value="ECO:0007669"/>
    <property type="project" value="UniProtKB-UniRule"/>
</dbReference>
<dbReference type="GO" id="GO:0009234">
    <property type="term" value="P:menaquinone biosynthetic process"/>
    <property type="evidence" value="ECO:0007669"/>
    <property type="project" value="UniProtKB-UniRule"/>
</dbReference>
<dbReference type="CDD" id="cd07037">
    <property type="entry name" value="TPP_PYR_MenD"/>
    <property type="match status" value="1"/>
</dbReference>
<dbReference type="CDD" id="cd02009">
    <property type="entry name" value="TPP_SHCHC_synthase"/>
    <property type="match status" value="1"/>
</dbReference>
<dbReference type="Gene3D" id="3.40.50.970">
    <property type="match status" value="2"/>
</dbReference>
<dbReference type="Gene3D" id="3.40.50.1220">
    <property type="entry name" value="TPP-binding domain"/>
    <property type="match status" value="1"/>
</dbReference>
<dbReference type="HAMAP" id="MF_01659">
    <property type="entry name" value="MenD"/>
    <property type="match status" value="1"/>
</dbReference>
<dbReference type="InterPro" id="IPR029035">
    <property type="entry name" value="DHS-like_NAD/FAD-binding_dom"/>
</dbReference>
<dbReference type="InterPro" id="IPR004433">
    <property type="entry name" value="MenaQ_synth_MenD"/>
</dbReference>
<dbReference type="InterPro" id="IPR032264">
    <property type="entry name" value="MenD_middle"/>
</dbReference>
<dbReference type="InterPro" id="IPR029061">
    <property type="entry name" value="THDP-binding"/>
</dbReference>
<dbReference type="InterPro" id="IPR012001">
    <property type="entry name" value="Thiamin_PyroP_enz_TPP-bd_dom"/>
</dbReference>
<dbReference type="InterPro" id="IPR011766">
    <property type="entry name" value="TPP_enzyme_TPP-bd"/>
</dbReference>
<dbReference type="NCBIfam" id="TIGR00173">
    <property type="entry name" value="menD"/>
    <property type="match status" value="1"/>
</dbReference>
<dbReference type="PANTHER" id="PTHR42916">
    <property type="entry name" value="2-SUCCINYL-5-ENOLPYRUVYL-6-HYDROXY-3-CYCLOHEXENE-1-CARBOXYLATE SYNTHASE"/>
    <property type="match status" value="1"/>
</dbReference>
<dbReference type="PANTHER" id="PTHR42916:SF1">
    <property type="entry name" value="PROTEIN PHYLLO, CHLOROPLASTIC"/>
    <property type="match status" value="1"/>
</dbReference>
<dbReference type="Pfam" id="PF02775">
    <property type="entry name" value="TPP_enzyme_C"/>
    <property type="match status" value="1"/>
</dbReference>
<dbReference type="Pfam" id="PF16582">
    <property type="entry name" value="TPP_enzyme_M_2"/>
    <property type="match status" value="1"/>
</dbReference>
<dbReference type="Pfam" id="PF02776">
    <property type="entry name" value="TPP_enzyme_N"/>
    <property type="match status" value="1"/>
</dbReference>
<dbReference type="PIRSF" id="PIRSF004983">
    <property type="entry name" value="MenD"/>
    <property type="match status" value="1"/>
</dbReference>
<dbReference type="SUPFAM" id="SSF52467">
    <property type="entry name" value="DHS-like NAD/FAD-binding domain"/>
    <property type="match status" value="1"/>
</dbReference>
<dbReference type="SUPFAM" id="SSF52518">
    <property type="entry name" value="Thiamin diphosphate-binding fold (THDP-binding)"/>
    <property type="match status" value="2"/>
</dbReference>
<accession>A4IS14</accession>
<proteinExistence type="inferred from homology"/>
<keyword id="KW-0460">Magnesium</keyword>
<keyword id="KW-0464">Manganese</keyword>
<keyword id="KW-0474">Menaquinone biosynthesis</keyword>
<keyword id="KW-0479">Metal-binding</keyword>
<keyword id="KW-0786">Thiamine pyrophosphate</keyword>
<keyword id="KW-0808">Transferase</keyword>
<evidence type="ECO:0000255" key="1">
    <source>
        <dbReference type="HAMAP-Rule" id="MF_01659"/>
    </source>
</evidence>
<name>MEND_GEOTN</name>
<sequence length="586" mass="63933">MTNALSWYVAAFVDGLVQAGVTEAVISPGSRSTPLAMAMAAHSGLHFSMHIDERSAAFFALGMVKAKQRPVALVCTSGTAAANYLPAIVEAYYSRVPLVVLTADRPHELRDVGAPQAIDQLHLYGRYAKWFVDLALPEETDPMLSYARTMAARAAAIAAGAPAGPVHVNVPLREPLVPTIDEAVWEKVRTVAETPQIMSGRATLPAENVAALYEQLAAAKRGLIVCGALDQPGFAEAVTELARTLDFPILADPLSQLRAGAHDKTYVIDSYDAILKDEAVASRLVPDVVLRFGAMPVSKPLFLWLKQHRSIRQIVVDDGGWRDPTLEAACFVRSDETVLCRQLLDIARPKQKESAWSTTWREMNDIARTVLRQHLPADEWFEGKVFTELAELLPAGATLFVGNSMPIRDADTFLFATDKPLRVLANRGANGIDGVVSSALGASLAASPLVLVIGDLSFYHDLNGLLAAKMHGLQATIVLMNNNGGGIFSFLPQARHEGPFETLFGTPTDLTFAHAVEMYGGRYAVPHTWGEFRHHVAESLNTGGLSVIEVRTSRTENVQMHRFLWERVSQEIAKFLEQKGTEEPWN</sequence>
<protein>
    <recommendedName>
        <fullName evidence="1">2-succinyl-5-enolpyruvyl-6-hydroxy-3-cyclohexene-1-carboxylate synthase</fullName>
        <shortName evidence="1">SEPHCHC synthase</shortName>
        <ecNumber evidence="1">2.2.1.9</ecNumber>
    </recommendedName>
    <alternativeName>
        <fullName evidence="1">Menaquinone biosynthesis protein MenD</fullName>
    </alternativeName>
</protein>